<accession>Q54VN6</accession>
<sequence>MKTSLCNYSEFKIYPARGMKFVRGDSKVFHFINTKVESLFFRKINPRDIRWSMVYRRIYKNTTTDVSAKKKARKTKKVERNIVGASLEVIQQKRAQKPEVKQAAAEQAKREIKEKKKAAAKKAAPKK</sequence>
<organism>
    <name type="scientific">Dictyostelium discoideum</name>
    <name type="common">Social amoeba</name>
    <dbReference type="NCBI Taxonomy" id="44689"/>
    <lineage>
        <taxon>Eukaryota</taxon>
        <taxon>Amoebozoa</taxon>
        <taxon>Evosea</taxon>
        <taxon>Eumycetozoa</taxon>
        <taxon>Dictyostelia</taxon>
        <taxon>Dictyosteliales</taxon>
        <taxon>Dictyosteliaceae</taxon>
        <taxon>Dictyostelium</taxon>
    </lineage>
</organism>
<dbReference type="EMBL" id="AAFI02000035">
    <property type="protein sequence ID" value="EAL67341.1"/>
    <property type="molecule type" value="Genomic_DNA"/>
</dbReference>
<dbReference type="RefSeq" id="XP_641319.1">
    <property type="nucleotide sequence ID" value="XM_636227.1"/>
</dbReference>
<dbReference type="PDB" id="5AN9">
    <property type="method" value="EM"/>
    <property type="resolution" value="3.30 A"/>
    <property type="chains" value="G=1-69"/>
</dbReference>
<dbReference type="PDB" id="5ANB">
    <property type="method" value="EM"/>
    <property type="resolution" value="4.10 A"/>
    <property type="chains" value="G=1-69"/>
</dbReference>
<dbReference type="PDB" id="5ANC">
    <property type="method" value="EM"/>
    <property type="resolution" value="4.20 A"/>
    <property type="chains" value="G=1-69"/>
</dbReference>
<dbReference type="PDB" id="6QKL">
    <property type="method" value="EM"/>
    <property type="resolution" value="3.30 A"/>
    <property type="chains" value="G=1-69"/>
</dbReference>
<dbReference type="PDBsum" id="5AN9"/>
<dbReference type="PDBsum" id="5ANB"/>
<dbReference type="PDBsum" id="5ANC"/>
<dbReference type="PDBsum" id="6QKL"/>
<dbReference type="SMR" id="Q54VN6"/>
<dbReference type="FunCoup" id="Q54VN6">
    <property type="interactions" value="593"/>
</dbReference>
<dbReference type="STRING" id="44689.Q54VN6"/>
<dbReference type="PaxDb" id="44689-DDB0230151"/>
<dbReference type="EnsemblProtists" id="EAL67341">
    <property type="protein sequence ID" value="EAL67341"/>
    <property type="gene ID" value="DDB_G0280229"/>
</dbReference>
<dbReference type="GeneID" id="8622451"/>
<dbReference type="KEGG" id="ddi:DDB_G0280229"/>
<dbReference type="dictyBase" id="DDB_G0280229">
    <property type="gene designation" value="rpl24"/>
</dbReference>
<dbReference type="VEuPathDB" id="AmoebaDB:DDB_G0280229"/>
<dbReference type="eggNOG" id="KOG1722">
    <property type="taxonomic scope" value="Eukaryota"/>
</dbReference>
<dbReference type="HOGENOM" id="CLU_106411_2_0_1"/>
<dbReference type="InParanoid" id="Q54VN6"/>
<dbReference type="OMA" id="PGHGKKM"/>
<dbReference type="PhylomeDB" id="Q54VN6"/>
<dbReference type="Reactome" id="R-DDI-156827">
    <property type="pathway name" value="L13a-mediated translational silencing of Ceruloplasmin expression"/>
</dbReference>
<dbReference type="Reactome" id="R-DDI-1799339">
    <property type="pathway name" value="SRP-dependent cotranslational protein targeting to membrane"/>
</dbReference>
<dbReference type="Reactome" id="R-DDI-72689">
    <property type="pathway name" value="Formation of a pool of free 40S subunits"/>
</dbReference>
<dbReference type="Reactome" id="R-DDI-72706">
    <property type="pathway name" value="GTP hydrolysis and joining of the 60S ribosomal subunit"/>
</dbReference>
<dbReference type="Reactome" id="R-DDI-975956">
    <property type="pathway name" value="Nonsense Mediated Decay (NMD) independent of the Exon Junction Complex (EJC)"/>
</dbReference>
<dbReference type="Reactome" id="R-DDI-975957">
    <property type="pathway name" value="Nonsense Mediated Decay (NMD) enhanced by the Exon Junction Complex (EJC)"/>
</dbReference>
<dbReference type="EvolutionaryTrace" id="Q54VN6"/>
<dbReference type="PRO" id="PR:Q54VN6"/>
<dbReference type="Proteomes" id="UP000002195">
    <property type="component" value="Chromosome 3"/>
</dbReference>
<dbReference type="GO" id="GO:0022625">
    <property type="term" value="C:cytosolic large ribosomal subunit"/>
    <property type="evidence" value="ECO:0000318"/>
    <property type="project" value="GO_Central"/>
</dbReference>
<dbReference type="GO" id="GO:0003729">
    <property type="term" value="F:mRNA binding"/>
    <property type="evidence" value="ECO:0000318"/>
    <property type="project" value="GO_Central"/>
</dbReference>
<dbReference type="GO" id="GO:0003735">
    <property type="term" value="F:structural constituent of ribosome"/>
    <property type="evidence" value="ECO:0000318"/>
    <property type="project" value="GO_Central"/>
</dbReference>
<dbReference type="GO" id="GO:0002181">
    <property type="term" value="P:cytoplasmic translation"/>
    <property type="evidence" value="ECO:0000318"/>
    <property type="project" value="GO_Central"/>
</dbReference>
<dbReference type="CDD" id="cd00472">
    <property type="entry name" value="Ribosomal_L24e_L24"/>
    <property type="match status" value="1"/>
</dbReference>
<dbReference type="Gene3D" id="6.10.250.1270">
    <property type="match status" value="1"/>
</dbReference>
<dbReference type="Gene3D" id="2.30.170.20">
    <property type="entry name" value="Ribosomal protein L24e"/>
    <property type="match status" value="1"/>
</dbReference>
<dbReference type="InterPro" id="IPR038630">
    <property type="entry name" value="L24e/L24_sf"/>
</dbReference>
<dbReference type="InterPro" id="IPR056366">
    <property type="entry name" value="Ribosomal_eL24"/>
</dbReference>
<dbReference type="InterPro" id="IPR000988">
    <property type="entry name" value="Ribosomal_eL24-rel_N"/>
</dbReference>
<dbReference type="InterPro" id="IPR023442">
    <property type="entry name" value="Ribosomal_eL24_CS"/>
</dbReference>
<dbReference type="PANTHER" id="PTHR10792">
    <property type="entry name" value="60S RIBOSOMAL PROTEIN L24"/>
    <property type="match status" value="1"/>
</dbReference>
<dbReference type="PANTHER" id="PTHR10792:SF1">
    <property type="entry name" value="RIBOSOMAL PROTEIN L24"/>
    <property type="match status" value="1"/>
</dbReference>
<dbReference type="Pfam" id="PF01246">
    <property type="entry name" value="Ribosomal_L24e"/>
    <property type="match status" value="1"/>
</dbReference>
<dbReference type="SUPFAM" id="SSF57716">
    <property type="entry name" value="Glucocorticoid receptor-like (DNA-binding domain)"/>
    <property type="match status" value="1"/>
</dbReference>
<dbReference type="PROSITE" id="PS01073">
    <property type="entry name" value="RIBOSOMAL_L24E"/>
    <property type="match status" value="1"/>
</dbReference>
<protein>
    <recommendedName>
        <fullName evidence="2">Large ribosomal subunit protein eL24</fullName>
    </recommendedName>
    <alternativeName>
        <fullName>60S ribosomal protein L24</fullName>
    </alternativeName>
</protein>
<name>RL24_DICDI</name>
<gene>
    <name type="primary">rpl24</name>
    <name type="ORF">DDB_G0280229</name>
</gene>
<comment type="similarity">
    <text evidence="2">Belongs to the eukaryotic ribosomal protein eL24 family.</text>
</comment>
<reference key="1">
    <citation type="journal article" date="2005" name="Nature">
        <title>The genome of the social amoeba Dictyostelium discoideum.</title>
        <authorList>
            <person name="Eichinger L."/>
            <person name="Pachebat J.A."/>
            <person name="Gloeckner G."/>
            <person name="Rajandream M.A."/>
            <person name="Sucgang R."/>
            <person name="Berriman M."/>
            <person name="Song J."/>
            <person name="Olsen R."/>
            <person name="Szafranski K."/>
            <person name="Xu Q."/>
            <person name="Tunggal B."/>
            <person name="Kummerfeld S."/>
            <person name="Madera M."/>
            <person name="Konfortov B.A."/>
            <person name="Rivero F."/>
            <person name="Bankier A.T."/>
            <person name="Lehmann R."/>
            <person name="Hamlin N."/>
            <person name="Davies R."/>
            <person name="Gaudet P."/>
            <person name="Fey P."/>
            <person name="Pilcher K."/>
            <person name="Chen G."/>
            <person name="Saunders D."/>
            <person name="Sodergren E.J."/>
            <person name="Davis P."/>
            <person name="Kerhornou A."/>
            <person name="Nie X."/>
            <person name="Hall N."/>
            <person name="Anjard C."/>
            <person name="Hemphill L."/>
            <person name="Bason N."/>
            <person name="Farbrother P."/>
            <person name="Desany B."/>
            <person name="Just E."/>
            <person name="Morio T."/>
            <person name="Rost R."/>
            <person name="Churcher C.M."/>
            <person name="Cooper J."/>
            <person name="Haydock S."/>
            <person name="van Driessche N."/>
            <person name="Cronin A."/>
            <person name="Goodhead I."/>
            <person name="Muzny D.M."/>
            <person name="Mourier T."/>
            <person name="Pain A."/>
            <person name="Lu M."/>
            <person name="Harper D."/>
            <person name="Lindsay R."/>
            <person name="Hauser H."/>
            <person name="James K.D."/>
            <person name="Quiles M."/>
            <person name="Madan Babu M."/>
            <person name="Saito T."/>
            <person name="Buchrieser C."/>
            <person name="Wardroper A."/>
            <person name="Felder M."/>
            <person name="Thangavelu M."/>
            <person name="Johnson D."/>
            <person name="Knights A."/>
            <person name="Loulseged H."/>
            <person name="Mungall K.L."/>
            <person name="Oliver K."/>
            <person name="Price C."/>
            <person name="Quail M.A."/>
            <person name="Urushihara H."/>
            <person name="Hernandez J."/>
            <person name="Rabbinowitsch E."/>
            <person name="Steffen D."/>
            <person name="Sanders M."/>
            <person name="Ma J."/>
            <person name="Kohara Y."/>
            <person name="Sharp S."/>
            <person name="Simmonds M.N."/>
            <person name="Spiegler S."/>
            <person name="Tivey A."/>
            <person name="Sugano S."/>
            <person name="White B."/>
            <person name="Walker D."/>
            <person name="Woodward J.R."/>
            <person name="Winckler T."/>
            <person name="Tanaka Y."/>
            <person name="Shaulsky G."/>
            <person name="Schleicher M."/>
            <person name="Weinstock G.M."/>
            <person name="Rosenthal A."/>
            <person name="Cox E.C."/>
            <person name="Chisholm R.L."/>
            <person name="Gibbs R.A."/>
            <person name="Loomis W.F."/>
            <person name="Platzer M."/>
            <person name="Kay R.R."/>
            <person name="Williams J.G."/>
            <person name="Dear P.H."/>
            <person name="Noegel A.A."/>
            <person name="Barrell B.G."/>
            <person name="Kuspa A."/>
        </authorList>
    </citation>
    <scope>NUCLEOTIDE SEQUENCE [LARGE SCALE GENOMIC DNA]</scope>
    <source>
        <strain>AX4</strain>
    </source>
</reference>
<proteinExistence type="evidence at protein level"/>
<evidence type="ECO:0000256" key="1">
    <source>
        <dbReference type="SAM" id="MobiDB-lite"/>
    </source>
</evidence>
<evidence type="ECO:0000305" key="2"/>
<evidence type="ECO:0007829" key="3">
    <source>
        <dbReference type="PDB" id="5AN9"/>
    </source>
</evidence>
<keyword id="KW-0002">3D-structure</keyword>
<keyword id="KW-1185">Reference proteome</keyword>
<keyword id="KW-0687">Ribonucleoprotein</keyword>
<keyword id="KW-0689">Ribosomal protein</keyword>
<feature type="chain" id="PRO_0000323428" description="Large ribosomal subunit protein eL24">
    <location>
        <begin position="1"/>
        <end position="127"/>
    </location>
</feature>
<feature type="region of interest" description="Disordered" evidence="1">
    <location>
        <begin position="93"/>
        <end position="127"/>
    </location>
</feature>
<feature type="compositionally biased region" description="Basic residues" evidence="1">
    <location>
        <begin position="115"/>
        <end position="127"/>
    </location>
</feature>
<feature type="strand" evidence="3">
    <location>
        <begin position="7"/>
        <end position="9"/>
    </location>
</feature>
<feature type="strand" evidence="3">
    <location>
        <begin position="20"/>
        <end position="22"/>
    </location>
</feature>
<feature type="helix" evidence="3">
    <location>
        <begin position="34"/>
        <end position="42"/>
    </location>
</feature>
<feature type="turn" evidence="3">
    <location>
        <begin position="46"/>
        <end position="48"/>
    </location>
</feature>
<feature type="helix" evidence="3">
    <location>
        <begin position="53"/>
        <end position="58"/>
    </location>
</feature>
<feature type="turn" evidence="3">
    <location>
        <begin position="64"/>
        <end position="67"/>
    </location>
</feature>